<name>LHA3_HALHL</name>
<sequence>MNQARIWLVVKPSVGLPLLLGVVLLIALLVHGAILTNTSWYPTYFEGNW</sequence>
<evidence type="ECO:0000255" key="1"/>
<evidence type="ECO:0000305" key="2"/>
<feature type="chain" id="PRO_0000099780" description="Light-harvesting protein B800/850/890 alpha-3 chain">
    <location>
        <begin position="1"/>
        <end position="49" status="greater than"/>
    </location>
</feature>
<feature type="topological domain" description="Cytoplasmic" evidence="1">
    <location>
        <begin position="1"/>
        <end position="14"/>
    </location>
</feature>
<feature type="transmembrane region" description="Helical" evidence="1">
    <location>
        <begin position="15"/>
        <end position="35"/>
    </location>
</feature>
<feature type="topological domain" description="Periplasmic" evidence="1">
    <location>
        <begin position="36"/>
        <end position="49" status="greater than"/>
    </location>
</feature>
<feature type="binding site" description="axial binding residue" evidence="1">
    <location>
        <position position="31"/>
    </location>
    <ligand>
        <name>a bacteriochlorophyll</name>
        <dbReference type="ChEBI" id="CHEBI:38201"/>
    </ligand>
    <ligandPart>
        <name>Mg</name>
        <dbReference type="ChEBI" id="CHEBI:25107"/>
    </ligandPart>
</feature>
<feature type="non-terminal residue">
    <location>
        <position position="49"/>
    </location>
</feature>
<reference key="1">
    <citation type="journal article" date="1992" name="Eur. J. Biochem.">
        <title>The primary structure of the antenna polypeptides of Ectothiorhodospira halochloris and Ectothiorhodospira halophila. Four core-type antenna polypeptides in E. halochloris and E. halophila.</title>
        <authorList>
            <person name="Wagner-Huber R."/>
            <person name="Brunisholz R.A."/>
            <person name="Bissig I."/>
            <person name="Frank G."/>
            <person name="Suter F."/>
            <person name="Zuber H."/>
        </authorList>
    </citation>
    <scope>PROTEIN SEQUENCE</scope>
</reference>
<protein>
    <recommendedName>
        <fullName>Light-harvesting protein B800/850/890 alpha-3 chain</fullName>
    </recommendedName>
    <alternativeName>
        <fullName>Antenna pigment protein alpha-3 chain</fullName>
    </alternativeName>
    <alternativeName>
        <fullName>EHA-alpha-3</fullName>
    </alternativeName>
</protein>
<keyword id="KW-0042">Antenna complex</keyword>
<keyword id="KW-0076">Bacteriochlorophyll</keyword>
<keyword id="KW-0997">Cell inner membrane</keyword>
<keyword id="KW-1003">Cell membrane</keyword>
<keyword id="KW-0148">Chlorophyll</keyword>
<keyword id="KW-0157">Chromophore</keyword>
<keyword id="KW-0903">Direct protein sequencing</keyword>
<keyword id="KW-0437">Light-harvesting polypeptide</keyword>
<keyword id="KW-0460">Magnesium</keyword>
<keyword id="KW-0472">Membrane</keyword>
<keyword id="KW-0479">Metal-binding</keyword>
<keyword id="KW-0812">Transmembrane</keyword>
<keyword id="KW-1133">Transmembrane helix</keyword>
<accession>P80107</accession>
<dbReference type="PIR" id="S23290">
    <property type="entry name" value="S23290"/>
</dbReference>
<dbReference type="SMR" id="P80107"/>
<dbReference type="STRING" id="349124.Hhal_1408"/>
<dbReference type="eggNOG" id="ENOG5033EHH">
    <property type="taxonomic scope" value="Bacteria"/>
</dbReference>
<dbReference type="GO" id="GO:0019866">
    <property type="term" value="C:organelle inner membrane"/>
    <property type="evidence" value="ECO:0007669"/>
    <property type="project" value="InterPro"/>
</dbReference>
<dbReference type="GO" id="GO:0005886">
    <property type="term" value="C:plasma membrane"/>
    <property type="evidence" value="ECO:0007669"/>
    <property type="project" value="UniProtKB-SubCell"/>
</dbReference>
<dbReference type="GO" id="GO:0030077">
    <property type="term" value="C:plasma membrane light-harvesting complex"/>
    <property type="evidence" value="ECO:0007669"/>
    <property type="project" value="InterPro"/>
</dbReference>
<dbReference type="GO" id="GO:0042314">
    <property type="term" value="F:bacteriochlorophyll binding"/>
    <property type="evidence" value="ECO:0007669"/>
    <property type="project" value="UniProtKB-KW"/>
</dbReference>
<dbReference type="GO" id="GO:0045156">
    <property type="term" value="F:electron transporter, transferring electrons within the cyclic electron transport pathway of photosynthesis activity"/>
    <property type="evidence" value="ECO:0007669"/>
    <property type="project" value="InterPro"/>
</dbReference>
<dbReference type="GO" id="GO:0046872">
    <property type="term" value="F:metal ion binding"/>
    <property type="evidence" value="ECO:0007669"/>
    <property type="project" value="UniProtKB-KW"/>
</dbReference>
<dbReference type="GO" id="GO:0019684">
    <property type="term" value="P:photosynthesis, light reaction"/>
    <property type="evidence" value="ECO:0007669"/>
    <property type="project" value="InterPro"/>
</dbReference>
<dbReference type="Gene3D" id="4.10.220.20">
    <property type="entry name" value="Light-harvesting complex"/>
    <property type="match status" value="1"/>
</dbReference>
<dbReference type="InterPro" id="IPR000066">
    <property type="entry name" value="Antenna_a/b"/>
</dbReference>
<dbReference type="InterPro" id="IPR018332">
    <property type="entry name" value="Antenna_alpha"/>
</dbReference>
<dbReference type="InterPro" id="IPR002361">
    <property type="entry name" value="Antenna_alpha_CS"/>
</dbReference>
<dbReference type="InterPro" id="IPR035889">
    <property type="entry name" value="Light-harvesting_complex"/>
</dbReference>
<dbReference type="Pfam" id="PF00556">
    <property type="entry name" value="LHC"/>
    <property type="match status" value="1"/>
</dbReference>
<dbReference type="PRINTS" id="PR00673">
    <property type="entry name" value="LIGHTHARVSTA"/>
</dbReference>
<dbReference type="SUPFAM" id="SSF56918">
    <property type="entry name" value="Light-harvesting complex subunits"/>
    <property type="match status" value="1"/>
</dbReference>
<dbReference type="PROSITE" id="PS00968">
    <property type="entry name" value="ANTENNA_COMP_ALPHA"/>
    <property type="match status" value="1"/>
</dbReference>
<organism>
    <name type="scientific">Halorhodospira halophila (strain DSM 244 / SL1)</name>
    <name type="common">Ectothiorhodospira halophila (strain DSM 244 / SL1)</name>
    <dbReference type="NCBI Taxonomy" id="349124"/>
    <lineage>
        <taxon>Bacteria</taxon>
        <taxon>Pseudomonadati</taxon>
        <taxon>Pseudomonadota</taxon>
        <taxon>Gammaproteobacteria</taxon>
        <taxon>Chromatiales</taxon>
        <taxon>Ectothiorhodospiraceae</taxon>
        <taxon>Halorhodospira</taxon>
    </lineage>
</organism>
<proteinExistence type="evidence at protein level"/>
<comment type="function">
    <text>Antenna complexes are light-harvesting systems, which transfer the excitation energy to the reaction centers.</text>
</comment>
<comment type="subunit">
    <text>The core complex is formed by different alpha and beta chains, binding bacteriochlorophyll molecules, and arranged most probably in tetrameric structures disposed around the reaction center. The non-pigmented gamma chains may constitute additional components.</text>
</comment>
<comment type="subcellular location">
    <subcellularLocation>
        <location>Cell inner membrane</location>
        <topology>Single-pass type II membrane protein</topology>
    </subcellularLocation>
</comment>
<comment type="similarity">
    <text evidence="2">Belongs to the antenna complex alpha subunit family.</text>
</comment>